<protein>
    <recommendedName>
        <fullName>Cytochrome b</fullName>
    </recommendedName>
    <alternativeName>
        <fullName>Complex III subunit 3</fullName>
    </alternativeName>
    <alternativeName>
        <fullName>Complex III subunit III</fullName>
    </alternativeName>
    <alternativeName>
        <fullName>Cytochrome b-c1 complex subunit 3</fullName>
    </alternativeName>
    <alternativeName>
        <fullName>Ubiquinol-cytochrome-c reductase complex cytochrome b subunit</fullName>
    </alternativeName>
</protein>
<comment type="function">
    <text evidence="2">Component of the ubiquinol-cytochrome c reductase complex (complex III or cytochrome b-c1 complex) that is part of the mitochondrial respiratory chain. The b-c1 complex mediates electron transfer from ubiquinol to cytochrome c. Contributes to the generation of a proton gradient across the mitochondrial membrane that is then used for ATP synthesis.</text>
</comment>
<comment type="cofactor">
    <cofactor evidence="2">
        <name>heme b</name>
        <dbReference type="ChEBI" id="CHEBI:60344"/>
    </cofactor>
    <text evidence="2">Binds 2 heme b groups non-covalently.</text>
</comment>
<comment type="subunit">
    <text evidence="2">The cytochrome bc1 complex contains 11 subunits: 3 respiratory subunits (MT-CYB, CYC1 and UQCRFS1), 2 core proteins (UQCRC1 and UQCRC2) and 6 low-molecular weight proteins (UQCRH/QCR6, UQCRB/QCR7, UQCRQ/QCR8, UQCR10/QCR9, UQCR11/QCR10 and a cleavage product of UQCRFS1). This cytochrome bc1 complex then forms a dimer.</text>
</comment>
<comment type="subcellular location">
    <subcellularLocation>
        <location evidence="2">Mitochondrion inner membrane</location>
        <topology evidence="2">Multi-pass membrane protein</topology>
    </subcellularLocation>
</comment>
<comment type="miscellaneous">
    <text evidence="1">Heme 1 (or BL or b562) is low-potential and absorbs at about 562 nm, and heme 2 (or BH or b566) is high-potential and absorbs at about 566 nm.</text>
</comment>
<comment type="similarity">
    <text evidence="3 4">Belongs to the cytochrome b family.</text>
</comment>
<comment type="caution">
    <text evidence="2">The full-length protein contains only eight transmembrane helices, not nine as predicted by bioinformatics tools.</text>
</comment>
<dbReference type="EMBL" id="AF153890">
    <property type="protein sequence ID" value="AAK26678.1"/>
    <property type="molecule type" value="Genomic_DNA"/>
</dbReference>
<dbReference type="SMR" id="Q9B1D2"/>
<dbReference type="GO" id="GO:0005743">
    <property type="term" value="C:mitochondrial inner membrane"/>
    <property type="evidence" value="ECO:0007669"/>
    <property type="project" value="UniProtKB-SubCell"/>
</dbReference>
<dbReference type="GO" id="GO:0045275">
    <property type="term" value="C:respiratory chain complex III"/>
    <property type="evidence" value="ECO:0007669"/>
    <property type="project" value="InterPro"/>
</dbReference>
<dbReference type="GO" id="GO:0046872">
    <property type="term" value="F:metal ion binding"/>
    <property type="evidence" value="ECO:0007669"/>
    <property type="project" value="UniProtKB-KW"/>
</dbReference>
<dbReference type="GO" id="GO:0008121">
    <property type="term" value="F:ubiquinol-cytochrome-c reductase activity"/>
    <property type="evidence" value="ECO:0007669"/>
    <property type="project" value="InterPro"/>
</dbReference>
<dbReference type="GO" id="GO:0006122">
    <property type="term" value="P:mitochondrial electron transport, ubiquinol to cytochrome c"/>
    <property type="evidence" value="ECO:0007669"/>
    <property type="project" value="TreeGrafter"/>
</dbReference>
<dbReference type="CDD" id="cd00290">
    <property type="entry name" value="cytochrome_b_C"/>
    <property type="match status" value="1"/>
</dbReference>
<dbReference type="CDD" id="cd00284">
    <property type="entry name" value="Cytochrome_b_N"/>
    <property type="match status" value="1"/>
</dbReference>
<dbReference type="FunFam" id="1.20.810.10:FF:000002">
    <property type="entry name" value="Cytochrome b"/>
    <property type="match status" value="1"/>
</dbReference>
<dbReference type="Gene3D" id="1.20.810.10">
    <property type="entry name" value="Cytochrome Bc1 Complex, Chain C"/>
    <property type="match status" value="1"/>
</dbReference>
<dbReference type="InterPro" id="IPR005798">
    <property type="entry name" value="Cyt_b/b6_C"/>
</dbReference>
<dbReference type="InterPro" id="IPR036150">
    <property type="entry name" value="Cyt_b/b6_C_sf"/>
</dbReference>
<dbReference type="InterPro" id="IPR005797">
    <property type="entry name" value="Cyt_b/b6_N"/>
</dbReference>
<dbReference type="InterPro" id="IPR027387">
    <property type="entry name" value="Cytb/b6-like_sf"/>
</dbReference>
<dbReference type="InterPro" id="IPR030689">
    <property type="entry name" value="Cytochrome_b"/>
</dbReference>
<dbReference type="InterPro" id="IPR048260">
    <property type="entry name" value="Cytochrome_b_C_euk/bac"/>
</dbReference>
<dbReference type="InterPro" id="IPR048259">
    <property type="entry name" value="Cytochrome_b_N_euk/bac"/>
</dbReference>
<dbReference type="InterPro" id="IPR016174">
    <property type="entry name" value="Di-haem_cyt_TM"/>
</dbReference>
<dbReference type="PANTHER" id="PTHR19271">
    <property type="entry name" value="CYTOCHROME B"/>
    <property type="match status" value="1"/>
</dbReference>
<dbReference type="PANTHER" id="PTHR19271:SF16">
    <property type="entry name" value="CYTOCHROME B"/>
    <property type="match status" value="1"/>
</dbReference>
<dbReference type="Pfam" id="PF00032">
    <property type="entry name" value="Cytochrom_B_C"/>
    <property type="match status" value="1"/>
</dbReference>
<dbReference type="Pfam" id="PF00033">
    <property type="entry name" value="Cytochrome_B"/>
    <property type="match status" value="1"/>
</dbReference>
<dbReference type="PIRSF" id="PIRSF038885">
    <property type="entry name" value="COB"/>
    <property type="match status" value="1"/>
</dbReference>
<dbReference type="SUPFAM" id="SSF81648">
    <property type="entry name" value="a domain/subunit of cytochrome bc1 complex (Ubiquinol-cytochrome c reductase)"/>
    <property type="match status" value="1"/>
</dbReference>
<dbReference type="SUPFAM" id="SSF81342">
    <property type="entry name" value="Transmembrane di-heme cytochromes"/>
    <property type="match status" value="1"/>
</dbReference>
<dbReference type="PROSITE" id="PS51003">
    <property type="entry name" value="CYTB_CTER"/>
    <property type="match status" value="1"/>
</dbReference>
<dbReference type="PROSITE" id="PS51002">
    <property type="entry name" value="CYTB_NTER"/>
    <property type="match status" value="1"/>
</dbReference>
<feature type="chain" id="PRO_0000254784" description="Cytochrome b">
    <location>
        <begin position="1"/>
        <end position="379"/>
    </location>
</feature>
<feature type="transmembrane region" description="Helical" evidence="2">
    <location>
        <begin position="33"/>
        <end position="53"/>
    </location>
</feature>
<feature type="transmembrane region" description="Helical" evidence="2">
    <location>
        <begin position="77"/>
        <end position="98"/>
    </location>
</feature>
<feature type="transmembrane region" description="Helical" evidence="2">
    <location>
        <begin position="113"/>
        <end position="133"/>
    </location>
</feature>
<feature type="transmembrane region" description="Helical" evidence="2">
    <location>
        <begin position="178"/>
        <end position="198"/>
    </location>
</feature>
<feature type="transmembrane region" description="Helical" evidence="2">
    <location>
        <begin position="226"/>
        <end position="246"/>
    </location>
</feature>
<feature type="transmembrane region" description="Helical" evidence="2">
    <location>
        <begin position="288"/>
        <end position="308"/>
    </location>
</feature>
<feature type="transmembrane region" description="Helical" evidence="2">
    <location>
        <begin position="320"/>
        <end position="340"/>
    </location>
</feature>
<feature type="transmembrane region" description="Helical" evidence="2">
    <location>
        <begin position="347"/>
        <end position="367"/>
    </location>
</feature>
<feature type="binding site" description="axial binding residue" evidence="2">
    <location>
        <position position="83"/>
    </location>
    <ligand>
        <name>heme b</name>
        <dbReference type="ChEBI" id="CHEBI:60344"/>
        <label>b562</label>
    </ligand>
    <ligandPart>
        <name>Fe</name>
        <dbReference type="ChEBI" id="CHEBI:18248"/>
    </ligandPart>
</feature>
<feature type="binding site" description="axial binding residue" evidence="2">
    <location>
        <position position="97"/>
    </location>
    <ligand>
        <name>heme b</name>
        <dbReference type="ChEBI" id="CHEBI:60344"/>
        <label>b566</label>
    </ligand>
    <ligandPart>
        <name>Fe</name>
        <dbReference type="ChEBI" id="CHEBI:18248"/>
    </ligandPart>
</feature>
<feature type="binding site" description="axial binding residue" evidence="2">
    <location>
        <position position="182"/>
    </location>
    <ligand>
        <name>heme b</name>
        <dbReference type="ChEBI" id="CHEBI:60344"/>
        <label>b562</label>
    </ligand>
    <ligandPart>
        <name>Fe</name>
        <dbReference type="ChEBI" id="CHEBI:18248"/>
    </ligandPart>
</feature>
<feature type="binding site" description="axial binding residue" evidence="2">
    <location>
        <position position="196"/>
    </location>
    <ligand>
        <name>heme b</name>
        <dbReference type="ChEBI" id="CHEBI:60344"/>
        <label>b566</label>
    </ligand>
    <ligandPart>
        <name>Fe</name>
        <dbReference type="ChEBI" id="CHEBI:18248"/>
    </ligandPart>
</feature>
<feature type="binding site" evidence="2">
    <location>
        <position position="201"/>
    </location>
    <ligand>
        <name>a ubiquinone</name>
        <dbReference type="ChEBI" id="CHEBI:16389"/>
    </ligand>
</feature>
<sequence>MTNIRKTHPLLKIENNAFIDLPAPSNISSWWNFGSLLGICLILQILTGLFLAMHYTADTTTAFSSVTHICRDVNYGWIIRYMHANGASMFFICLFMHVGRGLYYGSYTYMETWNIGVILLFATMATAFMGYVLPWGQMSFWGATVITNLLSAIPYIGTNLVEWIWGGFSVDKATLTRFFAFHFIFPFIIAALAMVHLLFLHETGSNNPTGISSDTDKIPFHPYYTIKDILGALLLVLALMTLVLFSPDLLGDPDNYTPANPLNTPPHIKPEWYFLFAYAILRSIPNKLGGVLALVLSILILVLMPLLHTSKQRSMMFRPISQCLFWILVADLLTLTWIGGQPVEHPYIIIGQLASIMYFLLILVLMPMASTIENNLLKW</sequence>
<reference key="1">
    <citation type="journal article" date="2001" name="Mol. Phylogenet. Evol.">
        <title>Retrieval of four adaptive lineages in duiker antelope: evidence from mitochondrial DNA sequences and fluorescence in situ hybridization.</title>
        <authorList>
            <person name="van Vuuren B.J."/>
            <person name="Robinson T.J."/>
        </authorList>
    </citation>
    <scope>NUCLEOTIDE SEQUENCE [GENOMIC DNA]</scope>
</reference>
<name>CYB_CEPNA</name>
<gene>
    <name type="primary">MT-CYB</name>
    <name type="synonym">COB</name>
    <name type="synonym">CYTB</name>
    <name type="synonym">MTCYB</name>
</gene>
<keyword id="KW-0249">Electron transport</keyword>
<keyword id="KW-0349">Heme</keyword>
<keyword id="KW-0408">Iron</keyword>
<keyword id="KW-0472">Membrane</keyword>
<keyword id="KW-0479">Metal-binding</keyword>
<keyword id="KW-0496">Mitochondrion</keyword>
<keyword id="KW-0999">Mitochondrion inner membrane</keyword>
<keyword id="KW-0679">Respiratory chain</keyword>
<keyword id="KW-0812">Transmembrane</keyword>
<keyword id="KW-1133">Transmembrane helix</keyword>
<keyword id="KW-0813">Transport</keyword>
<keyword id="KW-0830">Ubiquinone</keyword>
<geneLocation type="mitochondrion"/>
<organism>
    <name type="scientific">Cephalophorus natalensis</name>
    <name type="common">Natal red duiker</name>
    <name type="synonym">Cephalophus natalensis</name>
    <dbReference type="NCBI Taxonomy" id="69299"/>
    <lineage>
        <taxon>Eukaryota</taxon>
        <taxon>Metazoa</taxon>
        <taxon>Chordata</taxon>
        <taxon>Craniata</taxon>
        <taxon>Vertebrata</taxon>
        <taxon>Euteleostomi</taxon>
        <taxon>Mammalia</taxon>
        <taxon>Eutheria</taxon>
        <taxon>Laurasiatheria</taxon>
        <taxon>Artiodactyla</taxon>
        <taxon>Ruminantia</taxon>
        <taxon>Pecora</taxon>
        <taxon>Bovidae</taxon>
        <taxon>Cephalophinae</taxon>
        <taxon>Cephalophorus</taxon>
    </lineage>
</organism>
<evidence type="ECO:0000250" key="1"/>
<evidence type="ECO:0000250" key="2">
    <source>
        <dbReference type="UniProtKB" id="P00157"/>
    </source>
</evidence>
<evidence type="ECO:0000255" key="3">
    <source>
        <dbReference type="PROSITE-ProRule" id="PRU00967"/>
    </source>
</evidence>
<evidence type="ECO:0000255" key="4">
    <source>
        <dbReference type="PROSITE-ProRule" id="PRU00968"/>
    </source>
</evidence>
<proteinExistence type="inferred from homology"/>
<accession>Q9B1D2</accession>